<protein>
    <recommendedName>
        <fullName evidence="1">UPF0758 protein YicR</fullName>
    </recommendedName>
</protein>
<feature type="chain" id="PRO_1000089838" description="UPF0758 protein YicR">
    <location>
        <begin position="1"/>
        <end position="221"/>
    </location>
</feature>
<feature type="domain" description="MPN" evidence="2">
    <location>
        <begin position="99"/>
        <end position="221"/>
    </location>
</feature>
<feature type="short sequence motif" description="JAMM motif" evidence="2">
    <location>
        <begin position="170"/>
        <end position="183"/>
    </location>
</feature>
<feature type="binding site" evidence="2">
    <location>
        <position position="170"/>
    </location>
    <ligand>
        <name>Zn(2+)</name>
        <dbReference type="ChEBI" id="CHEBI:29105"/>
        <note>catalytic</note>
    </ligand>
</feature>
<feature type="binding site" evidence="2">
    <location>
        <position position="172"/>
    </location>
    <ligand>
        <name>Zn(2+)</name>
        <dbReference type="ChEBI" id="CHEBI:29105"/>
        <note>catalytic</note>
    </ligand>
</feature>
<feature type="binding site" evidence="2">
    <location>
        <position position="183"/>
    </location>
    <ligand>
        <name>Zn(2+)</name>
        <dbReference type="ChEBI" id="CHEBI:29105"/>
        <note>catalytic</note>
    </ligand>
</feature>
<reference key="1">
    <citation type="journal article" date="2011" name="J. Bacteriol.">
        <title>Comparative genomics of 28 Salmonella enterica isolates: evidence for CRISPR-mediated adaptive sublineage evolution.</title>
        <authorList>
            <person name="Fricke W.F."/>
            <person name="Mammel M.K."/>
            <person name="McDermott P.F."/>
            <person name="Tartera C."/>
            <person name="White D.G."/>
            <person name="Leclerc J.E."/>
            <person name="Ravel J."/>
            <person name="Cebula T.A."/>
        </authorList>
    </citation>
    <scope>NUCLEOTIDE SEQUENCE [LARGE SCALE GENOMIC DNA]</scope>
    <source>
        <strain>CT_02021853</strain>
    </source>
</reference>
<sequence length="221" mass="24890">MDTLDELLPREKMLRSGIASLSDVELLALFLRTGTPGKDVMTLAKEILQHFGSLYGLLSADFAQFRGVNGIGLAKFAQLKGIAELARRYYSVRMNEESALLSPEMTREFLQSQLTGEEREIFLVIFLDAQHRVLQHSRLFSGTLNHVEVHPREIVREAIKLNASAVILAHNHPSGCAEPSKADKLITERVIKCCQFMDIRVLDHLIIGRGEYVSFAERGWI</sequence>
<dbReference type="EMBL" id="CP001144">
    <property type="protein sequence ID" value="ACH75860.1"/>
    <property type="molecule type" value="Genomic_DNA"/>
</dbReference>
<dbReference type="SMR" id="B5FM62"/>
<dbReference type="KEGG" id="sed:SeD_A4116"/>
<dbReference type="HOGENOM" id="CLU_073529_0_1_6"/>
<dbReference type="Proteomes" id="UP000008322">
    <property type="component" value="Chromosome"/>
</dbReference>
<dbReference type="GO" id="GO:0046872">
    <property type="term" value="F:metal ion binding"/>
    <property type="evidence" value="ECO:0007669"/>
    <property type="project" value="UniProtKB-KW"/>
</dbReference>
<dbReference type="GO" id="GO:0008237">
    <property type="term" value="F:metallopeptidase activity"/>
    <property type="evidence" value="ECO:0007669"/>
    <property type="project" value="UniProtKB-KW"/>
</dbReference>
<dbReference type="GO" id="GO:0006508">
    <property type="term" value="P:proteolysis"/>
    <property type="evidence" value="ECO:0007669"/>
    <property type="project" value="UniProtKB-KW"/>
</dbReference>
<dbReference type="CDD" id="cd08071">
    <property type="entry name" value="MPN_DUF2466"/>
    <property type="match status" value="1"/>
</dbReference>
<dbReference type="Gene3D" id="3.40.140.10">
    <property type="entry name" value="Cytidine Deaminase, domain 2"/>
    <property type="match status" value="1"/>
</dbReference>
<dbReference type="HAMAP" id="MF_00018">
    <property type="entry name" value="UPF0758_YicR"/>
    <property type="match status" value="1"/>
</dbReference>
<dbReference type="InterPro" id="IPR037518">
    <property type="entry name" value="MPN"/>
</dbReference>
<dbReference type="InterPro" id="IPR025657">
    <property type="entry name" value="RadC_JAB"/>
</dbReference>
<dbReference type="InterPro" id="IPR010994">
    <property type="entry name" value="RuvA_2-like"/>
</dbReference>
<dbReference type="InterPro" id="IPR001405">
    <property type="entry name" value="UPF0758"/>
</dbReference>
<dbReference type="InterPro" id="IPR020891">
    <property type="entry name" value="UPF0758_CS"/>
</dbReference>
<dbReference type="InterPro" id="IPR046778">
    <property type="entry name" value="UPF0758_N"/>
</dbReference>
<dbReference type="InterPro" id="IPR022820">
    <property type="entry name" value="UPF0758_YicR"/>
</dbReference>
<dbReference type="NCBIfam" id="NF000642">
    <property type="entry name" value="PRK00024.1"/>
    <property type="match status" value="1"/>
</dbReference>
<dbReference type="NCBIfam" id="TIGR00608">
    <property type="entry name" value="radc"/>
    <property type="match status" value="1"/>
</dbReference>
<dbReference type="PANTHER" id="PTHR30471">
    <property type="entry name" value="DNA REPAIR PROTEIN RADC"/>
    <property type="match status" value="1"/>
</dbReference>
<dbReference type="PANTHER" id="PTHR30471:SF3">
    <property type="entry name" value="UPF0758 PROTEIN YEES-RELATED"/>
    <property type="match status" value="1"/>
</dbReference>
<dbReference type="Pfam" id="PF04002">
    <property type="entry name" value="RadC"/>
    <property type="match status" value="1"/>
</dbReference>
<dbReference type="Pfam" id="PF20582">
    <property type="entry name" value="UPF0758_N"/>
    <property type="match status" value="1"/>
</dbReference>
<dbReference type="SUPFAM" id="SSF47781">
    <property type="entry name" value="RuvA domain 2-like"/>
    <property type="match status" value="1"/>
</dbReference>
<dbReference type="PROSITE" id="PS50249">
    <property type="entry name" value="MPN"/>
    <property type="match status" value="1"/>
</dbReference>
<dbReference type="PROSITE" id="PS01302">
    <property type="entry name" value="UPF0758"/>
    <property type="match status" value="1"/>
</dbReference>
<comment type="similarity">
    <text evidence="1">Belongs to the UPF0758 family. YicR subfamily.</text>
</comment>
<organism>
    <name type="scientific">Salmonella dublin (strain CT_02021853)</name>
    <dbReference type="NCBI Taxonomy" id="439851"/>
    <lineage>
        <taxon>Bacteria</taxon>
        <taxon>Pseudomonadati</taxon>
        <taxon>Pseudomonadota</taxon>
        <taxon>Gammaproteobacteria</taxon>
        <taxon>Enterobacterales</taxon>
        <taxon>Enterobacteriaceae</taxon>
        <taxon>Salmonella</taxon>
    </lineage>
</organism>
<name>YICR_SALDC</name>
<gene>
    <name evidence="1" type="primary">yicR</name>
    <name type="ordered locus">SeD_A4116</name>
</gene>
<proteinExistence type="inferred from homology"/>
<keyword id="KW-0378">Hydrolase</keyword>
<keyword id="KW-0479">Metal-binding</keyword>
<keyword id="KW-0482">Metalloprotease</keyword>
<keyword id="KW-0645">Protease</keyword>
<keyword id="KW-0862">Zinc</keyword>
<evidence type="ECO:0000255" key="1">
    <source>
        <dbReference type="HAMAP-Rule" id="MF_00018"/>
    </source>
</evidence>
<evidence type="ECO:0000255" key="2">
    <source>
        <dbReference type="PROSITE-ProRule" id="PRU01182"/>
    </source>
</evidence>
<accession>B5FM62</accession>